<keyword id="KW-1003">Cell membrane</keyword>
<keyword id="KW-0472">Membrane</keyword>
<keyword id="KW-0552">Olfaction</keyword>
<keyword id="KW-0675">Receptor</keyword>
<keyword id="KW-0716">Sensory transduction</keyword>
<keyword id="KW-0807">Transducer</keyword>
<keyword id="KW-0812">Transmembrane</keyword>
<keyword id="KW-1133">Transmembrane helix</keyword>
<evidence type="ECO:0000255" key="1"/>
<evidence type="ECO:0000269" key="2">
    <source>
    </source>
</evidence>
<evidence type="ECO:0000303" key="3">
    <source>
    </source>
</evidence>
<evidence type="ECO:0000305" key="4"/>
<evidence type="ECO:0000312" key="5">
    <source>
        <dbReference type="EMBL" id="KXJ77288.1"/>
    </source>
</evidence>
<evidence type="ECO:0000312" key="6">
    <source>
        <dbReference type="Proteomes" id="UP000069940"/>
    </source>
</evidence>
<proteinExistence type="evidence at transcript level"/>
<name>OR10_AEDAL</name>
<protein>
    <recommendedName>
        <fullName evidence="4">Odorant receptor 10</fullName>
        <shortName evidence="3">AalOR10</shortName>
    </recommendedName>
</protein>
<feature type="chain" id="PRO_0000460274" description="Odorant receptor 10" evidence="1">
    <location>
        <begin position="1"/>
        <end position="375"/>
    </location>
</feature>
<feature type="transmembrane region" description="Helical" evidence="1">
    <location>
        <begin position="32"/>
        <end position="52"/>
    </location>
</feature>
<feature type="transmembrane region" description="Helical" evidence="1">
    <location>
        <begin position="58"/>
        <end position="78"/>
    </location>
</feature>
<feature type="transmembrane region" description="Helical" evidence="1">
    <location>
        <begin position="125"/>
        <end position="145"/>
    </location>
</feature>
<feature type="transmembrane region" description="Helical" evidence="1">
    <location>
        <begin position="167"/>
        <end position="187"/>
    </location>
</feature>
<feature type="transmembrane region" description="Helical" evidence="1">
    <location>
        <begin position="250"/>
        <end position="270"/>
    </location>
</feature>
<feature type="transmembrane region" description="Helical" evidence="1">
    <location>
        <begin position="279"/>
        <end position="299"/>
    </location>
</feature>
<accession>A0A182GD79</accession>
<reference evidence="5" key="1">
    <citation type="journal article" date="2015" name="Proc. Natl. Acad. Sci. U.S.A.">
        <title>Genome sequence of the Asian Tiger mosquito, Aedes albopictus, reveals insights into its biology, genetics, and evolution.</title>
        <authorList>
            <person name="Chen X.G."/>
            <person name="Jiang X."/>
            <person name="Gu J."/>
            <person name="Xu M."/>
            <person name="Wu Y."/>
            <person name="Deng Y."/>
            <person name="Zhang C."/>
            <person name="Bonizzoni M."/>
            <person name="Dermauw W."/>
            <person name="Vontas J."/>
            <person name="Armbruster P."/>
            <person name="Huang X."/>
            <person name="Yang Y."/>
            <person name="Zhang H."/>
            <person name="He W."/>
            <person name="Peng H."/>
            <person name="Liu Y."/>
            <person name="Wu K."/>
            <person name="Chen J."/>
            <person name="Lirakis M."/>
            <person name="Topalis P."/>
            <person name="Van Leeuwen T."/>
            <person name="Hall A.B."/>
            <person name="Jiang X."/>
            <person name="Thorpe C."/>
            <person name="Mueller R.L."/>
            <person name="Sun C."/>
            <person name="Waterhouse R.M."/>
            <person name="Yan G."/>
            <person name="Tu Z.J."/>
            <person name="Fang X."/>
            <person name="James A.A."/>
        </authorList>
    </citation>
    <scope>NUCLEOTIDE SEQUENCE [LARGE SCALE GENOMIC DNA]</scope>
    <source>
        <strain evidence="5">Foshan</strain>
    </source>
</reference>
<reference evidence="4" key="2">
    <citation type="journal article" date="2016" name="Parasit. Vectors">
        <title>Functional analysis of Orco and odorant receptors in odor recognition in Aedes albopictus.</title>
        <authorList>
            <person name="Liu H."/>
            <person name="Liu T."/>
            <person name="Xie L."/>
            <person name="Wang X."/>
            <person name="Deng Y."/>
            <person name="Chen C.H."/>
            <person name="James A.A."/>
            <person name="Chen X.G."/>
        </authorList>
    </citation>
    <scope>FUNCTION</scope>
    <scope>SUBCELLULAR LOCATION</scope>
    <scope>TISSUE SPECIFICITY</scope>
    <scope>DEVELOPMENTAL STAGE</scope>
    <scope>DISRUPTION PHENOTYPE</scope>
</reference>
<comment type="function">
    <text evidence="2">Odorant receptor which complexes with Orco, a coreceptor, to form odorant-sensing units, providing sensitive and prolonged odorant signaling and calcium permeability (PubMed:27350348). Can sense indole, 1-octen-3-ol, 3-methyindole and an insect repellent DEET (PubMed:27350348).</text>
</comment>
<comment type="subcellular location">
    <subcellularLocation>
        <location evidence="2">Cell membrane</location>
        <topology evidence="1">Multi-pass membrane protein</topology>
    </subcellularLocation>
</comment>
<comment type="tissue specificity">
    <text evidence="2">Expressed in female antenna, maxillary palp and proboscis (PubMed:27350348). Expressed in female body (PubMed:27350348). Expressed in male tissues (PubMed:27350348).</text>
</comment>
<comment type="developmental stage">
    <text evidence="2">Expressed in pupal and larval stages.</text>
</comment>
<comment type="disruption phenotype">
    <text evidence="2">RNAi-mediated knockdown does not affect mosquito blood feeding rate.</text>
</comment>
<comment type="similarity">
    <text evidence="4">Belongs to the insect chemoreceptor superfamily. Heteromeric odorant receptor channel (TC 1.A.69) family.</text>
</comment>
<comment type="caution">
    <text evidence="4">Only 6 transmembrane domains are predicted for this protein in contrast to the 7 domains usually found in members of the insect chemoreceptor superfamily.</text>
</comment>
<dbReference type="EMBL" id="JXUM01055449">
    <property type="status" value="NOT_ANNOTATED_CDS"/>
    <property type="molecule type" value="Genomic_DNA"/>
</dbReference>
<dbReference type="EMBL" id="KQ561867">
    <property type="protein sequence ID" value="KXJ77288.1"/>
    <property type="molecule type" value="Genomic_DNA"/>
</dbReference>
<dbReference type="SMR" id="A0A182GD79"/>
<dbReference type="EnsemblMetazoa" id="AALF007898-RA">
    <property type="protein sequence ID" value="AALF007898-PA"/>
    <property type="gene ID" value="AALF007898"/>
</dbReference>
<dbReference type="VEuPathDB" id="VectorBase:AALC636_015933"/>
<dbReference type="VEuPathDB" id="VectorBase:AALF007898"/>
<dbReference type="VEuPathDB" id="VectorBase:AALFPA_072406"/>
<dbReference type="OMA" id="YIPYTNM"/>
<dbReference type="OrthoDB" id="7760781at2759"/>
<dbReference type="Proteomes" id="UP000069940">
    <property type="component" value="Unassembled WGS sequence"/>
</dbReference>
<dbReference type="GO" id="GO:0005886">
    <property type="term" value="C:plasma membrane"/>
    <property type="evidence" value="ECO:0007669"/>
    <property type="project" value="UniProtKB-SubCell"/>
</dbReference>
<dbReference type="GO" id="GO:0005549">
    <property type="term" value="F:odorant binding"/>
    <property type="evidence" value="ECO:0007669"/>
    <property type="project" value="InterPro"/>
</dbReference>
<dbReference type="GO" id="GO:0004984">
    <property type="term" value="F:olfactory receptor activity"/>
    <property type="evidence" value="ECO:0007669"/>
    <property type="project" value="InterPro"/>
</dbReference>
<dbReference type="GO" id="GO:0007165">
    <property type="term" value="P:signal transduction"/>
    <property type="evidence" value="ECO:0007669"/>
    <property type="project" value="UniProtKB-KW"/>
</dbReference>
<dbReference type="InterPro" id="IPR004117">
    <property type="entry name" value="7tm6_olfct_rcpt"/>
</dbReference>
<dbReference type="PANTHER" id="PTHR21137">
    <property type="entry name" value="ODORANT RECEPTOR"/>
    <property type="match status" value="1"/>
</dbReference>
<dbReference type="PANTHER" id="PTHR21137:SF3">
    <property type="entry name" value="ODORANT RECEPTOR 30A-RELATED"/>
    <property type="match status" value="1"/>
</dbReference>
<dbReference type="Pfam" id="PF02949">
    <property type="entry name" value="7tm_6"/>
    <property type="match status" value="1"/>
</dbReference>
<gene>
    <name evidence="5" type="ORF">RP20_CCG007898</name>
</gene>
<sequence length="375" mass="43303">MESILSCPIVSVNARVWRFWSFVLKHDAMRYISIIPVTVMTFFMFLDLGHSWGDFQDVIIKGYFAVLYFNAVLRTLILVKDRKLYENFMEGISKFYFEISRIDDHQIQSLLRSYTTRARMLSISNLALGAIISTCFTVYPMFTGVRGLPYGMFIPGVDGYQSPQYEIIYLVQVVLTFPGCCMYIPFTSFFVSTTLFGLVQIKTLQRQLQTFKDGIGSHENKNADLQVIKLIQDHKRIIAYVSELNSLVTYICFVEFLSFGLMLCALLFLLNVIENHAQIVIVAAYIFMIISQIFAFYWHANEVREESMNIAVAAYSGPWVELDDSIKKKLLLIILRAQQPLEITVGNVYPMTLEMFQSLLNASYSYFTLLRRVYN</sequence>
<organism evidence="6">
    <name type="scientific">Aedes albopictus</name>
    <name type="common">Asian tiger mosquito</name>
    <name type="synonym">Stegomyia albopicta</name>
    <dbReference type="NCBI Taxonomy" id="7160"/>
    <lineage>
        <taxon>Eukaryota</taxon>
        <taxon>Metazoa</taxon>
        <taxon>Ecdysozoa</taxon>
        <taxon>Arthropoda</taxon>
        <taxon>Hexapoda</taxon>
        <taxon>Insecta</taxon>
        <taxon>Pterygota</taxon>
        <taxon>Neoptera</taxon>
        <taxon>Endopterygota</taxon>
        <taxon>Diptera</taxon>
        <taxon>Nematocera</taxon>
        <taxon>Culicoidea</taxon>
        <taxon>Culicidae</taxon>
        <taxon>Culicinae</taxon>
        <taxon>Aedini</taxon>
        <taxon>Aedes</taxon>
        <taxon>Stegomyia</taxon>
    </lineage>
</organism>